<accession>Q5NUF4</accession>
<feature type="chain" id="PRO_0000424102" description="2-hydroxyisoflavanone dehydratase">
    <location>
        <begin position="1"/>
        <end position="328"/>
    </location>
</feature>
<feature type="short sequence motif" description="Involved in the stabilization of the negatively charged intermediate by the formation of the oxyanion hole" evidence="1">
    <location>
        <begin position="85"/>
        <end position="87"/>
    </location>
</feature>
<feature type="active site" evidence="1">
    <location>
        <position position="173"/>
    </location>
</feature>
<feature type="active site" evidence="1">
    <location>
        <position position="272"/>
    </location>
</feature>
<feature type="active site" evidence="1">
    <location>
        <position position="304"/>
    </location>
</feature>
<keyword id="KW-0284">Flavonoid biosynthesis</keyword>
<keyword id="KW-0378">Hydrolase</keyword>
<keyword id="KW-0456">Lyase</keyword>
<comment type="function">
    <text evidence="2">Dehydratase that mediates the biosynthesis of isoflavonoids. Can better use 2,7-dihydroxy-4'-methoxyisoflavanone as substrate. Has also a slight carboxylesterase activity toward p-nitrophenyl butyrate.</text>
</comment>
<comment type="catalytic activity">
    <reaction evidence="2">
        <text>(2R,3S)-2,4',7-trihydroxyisoflavanone = daidzein + H2O + H(+)</text>
        <dbReference type="Rhea" id="RHEA:16445"/>
        <dbReference type="ChEBI" id="CHEBI:15377"/>
        <dbReference type="ChEBI" id="CHEBI:15378"/>
        <dbReference type="ChEBI" id="CHEBI:63325"/>
        <dbReference type="ChEBI" id="CHEBI:77764"/>
        <dbReference type="EC" id="4.2.1.105"/>
    </reaction>
</comment>
<comment type="catalytic activity">
    <reaction evidence="2">
        <text>2-hydroxy-2,3-dihydrogenistein = genistein + H2O + H(+)</text>
        <dbReference type="Rhea" id="RHEA:36803"/>
        <dbReference type="ChEBI" id="CHEBI:15377"/>
        <dbReference type="ChEBI" id="CHEBI:15378"/>
        <dbReference type="ChEBI" id="CHEBI:31080"/>
        <dbReference type="ChEBI" id="CHEBI:74224"/>
        <dbReference type="EC" id="4.2.1.105"/>
    </reaction>
</comment>
<comment type="catalytic activity">
    <reaction evidence="2">
        <text>a carboxylic ester + H2O = an alcohol + a carboxylate + H(+)</text>
        <dbReference type="Rhea" id="RHEA:21164"/>
        <dbReference type="ChEBI" id="CHEBI:15377"/>
        <dbReference type="ChEBI" id="CHEBI:15378"/>
        <dbReference type="ChEBI" id="CHEBI:29067"/>
        <dbReference type="ChEBI" id="CHEBI:30879"/>
        <dbReference type="ChEBI" id="CHEBI:33308"/>
        <dbReference type="EC" id="3.1.1.1"/>
    </reaction>
</comment>
<comment type="biophysicochemical properties">
    <kinetics>
        <KM evidence="2">58 uM for 2,7-dihydroxy-4'-methoxyisoflavanone (at pH 7.5 and 30 degrees Celsius)</KM>
        <KM evidence="2">210 uM for 2,7,4'-trihydroxyisoflavanone (at pH 7.5 and 30 degrees Celsius)</KM>
        <KM evidence="2">304 uM for 2,5,7,4'-tetrahydroxyisoflavanone (at pH 7.5 and 30 degrees Celsius)</KM>
        <text>kcat is 9.8 sec(-1) with 2,7-dihydroxy-4'-methoxyisoflavanone, 0.12 sec(-1) with 2,7,4'-trihydroxyisoflavanone and 0.19 sec(-1) with 2,5,7,4'-tetrahydroxyisoflavanone as substrates, respectively (at pH 7.5 and 30 degrees Celsius).</text>
    </kinetics>
</comment>
<comment type="pathway">
    <text>Secondary metabolite biosynthesis; flavonoid biosynthesis.</text>
</comment>
<comment type="similarity">
    <text evidence="3">Belongs to the 'GDXG' lipolytic enzyme family.</text>
</comment>
<gene>
    <name type="primary">HIDM</name>
</gene>
<sequence length="328" mass="36061">MASSTSTTTSKEIDRELPPLLRVYKDGTVERFLGSSFVPPSPEDPETGVSTKDIVISENPTISARVYLPKLNNTTEKLPILVYYHGGAFCLESAFSFLHQRYLNIVASKANVLVVSIEYRLAPEHPLPAAYEDGWYALKWVTSHSTNNNKPTNADPWLIKHGDFNRFYIGGDTSGANIAHNAALRVGAEALPGGLRIAGVLSAFPLFWGSKPVLSEPVEGHEKSSPMQVWNFVYPDAPGGIDNPLINPLAPGAPNLATLGCPKMLVFVAGKDDLRDRGIWYYEAVKESGWKGDVELAQYEGEEHCFQIYHPETENSKDLIGRIASFLV</sequence>
<reference key="1">
    <citation type="journal article" date="2005" name="Plant Physiol.">
        <title>Molecular and biochemical characterization of 2-hydroxyisoflavanone dehydratase. Involvement of carboxylesterase-like proteins in leguminous isoflavone biosynthesis.</title>
        <authorList>
            <person name="Akashi T."/>
            <person name="Aoki T."/>
            <person name="Ayabe S."/>
        </authorList>
    </citation>
    <scope>NUCLEOTIDE SEQUENCE [MRNA]</scope>
    <scope>FUNCTION</scope>
    <scope>CATALYTIC ACTIVITY</scope>
    <scope>BIOPHYSICOCHEMICAL PROPERTIES</scope>
    <source>
        <tissue>Protoplast</tissue>
    </source>
</reference>
<evidence type="ECO:0000250" key="1">
    <source>
        <dbReference type="UniProtKB" id="Q5NUF3"/>
    </source>
</evidence>
<evidence type="ECO:0000269" key="2">
    <source>
    </source>
</evidence>
<evidence type="ECO:0000305" key="3"/>
<organism>
    <name type="scientific">Glycyrrhiza echinata</name>
    <name type="common">Licorice</name>
    <dbReference type="NCBI Taxonomy" id="46348"/>
    <lineage>
        <taxon>Eukaryota</taxon>
        <taxon>Viridiplantae</taxon>
        <taxon>Streptophyta</taxon>
        <taxon>Embryophyta</taxon>
        <taxon>Tracheophyta</taxon>
        <taxon>Spermatophyta</taxon>
        <taxon>Magnoliopsida</taxon>
        <taxon>eudicotyledons</taxon>
        <taxon>Gunneridae</taxon>
        <taxon>Pentapetalae</taxon>
        <taxon>rosids</taxon>
        <taxon>fabids</taxon>
        <taxon>Fabales</taxon>
        <taxon>Fabaceae</taxon>
        <taxon>Papilionoideae</taxon>
        <taxon>50 kb inversion clade</taxon>
        <taxon>NPAAA clade</taxon>
        <taxon>Hologalegina</taxon>
        <taxon>IRL clade</taxon>
        <taxon>Galegeae</taxon>
        <taxon>Glycyrrhiza</taxon>
    </lineage>
</organism>
<proteinExistence type="evidence at protein level"/>
<protein>
    <recommendedName>
        <fullName>2-hydroxyisoflavanone dehydratase</fullName>
        <ecNumber>3.1.1.1</ecNumber>
        <ecNumber>4.2.1.105</ecNumber>
    </recommendedName>
    <alternativeName>
        <fullName>Carboxylesterase HIDM</fullName>
    </alternativeName>
</protein>
<dbReference type="EC" id="3.1.1.1"/>
<dbReference type="EC" id="4.2.1.105"/>
<dbReference type="EMBL" id="AB154414">
    <property type="protein sequence ID" value="BAD80839.1"/>
    <property type="molecule type" value="mRNA"/>
</dbReference>
<dbReference type="SMR" id="Q5NUF4"/>
<dbReference type="ESTHER" id="glyec-q5nuf4">
    <property type="family name" value="Plant_carboxylesterase"/>
</dbReference>
<dbReference type="BRENDA" id="4.2.1.105">
    <property type="organism ID" value="2486"/>
</dbReference>
<dbReference type="SABIO-RK" id="Q5NUF4"/>
<dbReference type="UniPathway" id="UPA00154"/>
<dbReference type="GO" id="GO:0033987">
    <property type="term" value="F:2-hydroxyisoflavanone dehydratase activity"/>
    <property type="evidence" value="ECO:0000314"/>
    <property type="project" value="UniProtKB"/>
</dbReference>
<dbReference type="GO" id="GO:0106435">
    <property type="term" value="F:carboxylesterase activity"/>
    <property type="evidence" value="ECO:0000314"/>
    <property type="project" value="UniProtKB"/>
</dbReference>
<dbReference type="GO" id="GO:0009813">
    <property type="term" value="P:flavonoid biosynthetic process"/>
    <property type="evidence" value="ECO:0007669"/>
    <property type="project" value="UniProtKB-UniPathway"/>
</dbReference>
<dbReference type="GO" id="GO:0009717">
    <property type="term" value="P:isoflavonoid biosynthetic process"/>
    <property type="evidence" value="ECO:0000314"/>
    <property type="project" value="UniProtKB"/>
</dbReference>
<dbReference type="GO" id="GO:0046287">
    <property type="term" value="P:isoflavonoid metabolic process"/>
    <property type="evidence" value="ECO:0000314"/>
    <property type="project" value="UniProtKB"/>
</dbReference>
<dbReference type="FunFam" id="3.40.50.1820:FF:000376">
    <property type="entry name" value="Probable carboxylesterase 12"/>
    <property type="match status" value="1"/>
</dbReference>
<dbReference type="Gene3D" id="3.40.50.1820">
    <property type="entry name" value="alpha/beta hydrolase"/>
    <property type="match status" value="1"/>
</dbReference>
<dbReference type="InterPro" id="IPR013094">
    <property type="entry name" value="AB_hydrolase_3"/>
</dbReference>
<dbReference type="InterPro" id="IPR029058">
    <property type="entry name" value="AB_hydrolase_fold"/>
</dbReference>
<dbReference type="InterPro" id="IPR050466">
    <property type="entry name" value="Carboxylest/Gibb_receptor"/>
</dbReference>
<dbReference type="PANTHER" id="PTHR23024:SF449">
    <property type="entry name" value="2-HYDROXYISOFLAVANONE DEHYDRATASE"/>
    <property type="match status" value="1"/>
</dbReference>
<dbReference type="PANTHER" id="PTHR23024">
    <property type="entry name" value="ARYLACETAMIDE DEACETYLASE"/>
    <property type="match status" value="1"/>
</dbReference>
<dbReference type="Pfam" id="PF07859">
    <property type="entry name" value="Abhydrolase_3"/>
    <property type="match status" value="1"/>
</dbReference>
<dbReference type="SUPFAM" id="SSF53474">
    <property type="entry name" value="alpha/beta-Hydrolases"/>
    <property type="match status" value="1"/>
</dbReference>
<name>HIDM_GLYEC</name>